<dbReference type="EMBL" id="X62475">
    <property type="protein sequence ID" value="CAA44336.1"/>
    <property type="molecule type" value="Genomic_DNA"/>
</dbReference>
<dbReference type="PIR" id="S18145">
    <property type="entry name" value="D39999"/>
</dbReference>
<dbReference type="RefSeq" id="NP_052327.1">
    <property type="nucleotide sequence ID" value="NC_002117.1"/>
</dbReference>
<dbReference type="RefSeq" id="WP_010891148.1">
    <property type="nucleotide sequence ID" value="NZ_PJQA01000017.1"/>
</dbReference>
<dbReference type="GeneID" id="12242272"/>
<dbReference type="OMA" id="TFLDWIV"/>
<dbReference type="OrthoDB" id="17166at2"/>
<dbReference type="PRO" id="PR:Q46260"/>
<keyword id="KW-0614">Plasmid</keyword>
<sequence length="347" mass="40408">MVKSENQIIKSSLHLENQKFGRKPQLSEDLFELFPSICTESKIEVIGLDLQPSHYHALAAIQKLLTATNYRGNLEGSYLSRETNTFKFEGTIPRIKFTKSEYLEAYGVKKYKTSRNKNEFGGKEALIALEALYHLGNEPYLIVATRKRWNKGEEVVDRYQTFSPILRICEGWEGLTPKENKALDEEPFLNLISKKHKGFIIEPCPIIVDQIDSYFVLKPANMYQEIKLRFPNASKFTYTFIDWIVSTATRKKMNSSGSKEWPDKIEIGFENLSYTLRMNRYITSRNWKKIESAINRCIEIAIELKWLNKHERIQGKTISKKEVFYLNKSKFQQISTNKTIQSTTNKN</sequence>
<geneLocation type="plasmid">
    <name>pCpA1</name>
</geneLocation>
<feature type="chain" id="PRO_0000218340" description="Virulence plasmid protein pGP2-D">
    <location>
        <begin position="1"/>
        <end position="347"/>
    </location>
</feature>
<protein>
    <recommendedName>
        <fullName>Virulence plasmid protein pGP2-D</fullName>
    </recommendedName>
</protein>
<name>GP2D_CHLPS</name>
<accession>Q46260</accession>
<organism>
    <name type="scientific">Chlamydia psittaci</name>
    <name type="common">Chlamydophila psittaci</name>
    <dbReference type="NCBI Taxonomy" id="83554"/>
    <lineage>
        <taxon>Bacteria</taxon>
        <taxon>Pseudomonadati</taxon>
        <taxon>Chlamydiota</taxon>
        <taxon>Chlamydiia</taxon>
        <taxon>Chlamydiales</taxon>
        <taxon>Chlamydiaceae</taxon>
        <taxon>Chlamydia/Chlamydophila group</taxon>
        <taxon>Chlamydia</taxon>
    </lineage>
</organism>
<reference key="1">
    <citation type="journal article" date="1997" name="Microbiology">
        <title>Plasmid diversity in Chlamydia.</title>
        <authorList>
            <person name="Thomas N.S."/>
            <person name="Lusher M."/>
            <person name="Storey C.C."/>
            <person name="Clarke I.N."/>
        </authorList>
    </citation>
    <scope>NUCLEOTIDE SEQUENCE [GENOMIC DNA]</scope>
    <source>
        <strain>N352</strain>
    </source>
</reference>
<proteinExistence type="predicted"/>